<keyword id="KW-0150">Chloroplast</keyword>
<keyword id="KW-0903">Direct protein sequencing</keyword>
<keyword id="KW-0602">Photosynthesis</keyword>
<keyword id="KW-0603">Photosystem I</keyword>
<keyword id="KW-0934">Plastid</keyword>
<keyword id="KW-0793">Thylakoid</keyword>
<feature type="chain" id="PRO_0000207748" description="Photosystem I reaction center subunit III">
    <location>
        <begin position="1"/>
        <end position="26" status="greater than"/>
    </location>
</feature>
<feature type="region of interest" description="Disordered" evidence="1">
    <location>
        <begin position="1"/>
        <end position="26"/>
    </location>
</feature>
<feature type="compositionally biased region" description="Basic and acidic residues" evidence="1">
    <location>
        <begin position="9"/>
        <end position="26"/>
    </location>
</feature>
<feature type="unsure residue">
    <location>
        <position position="8"/>
    </location>
</feature>
<feature type="non-terminal residue">
    <location>
        <position position="26"/>
    </location>
</feature>
<sequence length="26" mass="3055">DISGLTPCKESKQFXKREKQQXKXLE</sequence>
<reference key="1">
    <citation type="journal article" date="1991" name="Biochim. Biophys. Acta">
        <title>Characterization of genes that encode subunits of cucumber PS I complex by N-terminal sequencing.</title>
        <authorList>
            <person name="Iwasaki Y."/>
            <person name="Ishikawa H."/>
            <person name="Hibino T."/>
            <person name="Takabe T."/>
        </authorList>
    </citation>
    <scope>PROTEIN SEQUENCE</scope>
    <source>
        <tissue>Cotyledon</tissue>
    </source>
</reference>
<evidence type="ECO:0000256" key="1">
    <source>
        <dbReference type="SAM" id="MobiDB-lite"/>
    </source>
</evidence>
<evidence type="ECO:0000305" key="2"/>
<name>PSAF_CUCSA</name>
<accession>P42048</accession>
<proteinExistence type="evidence at protein level"/>
<gene>
    <name type="primary">PSAF</name>
</gene>
<protein>
    <recommendedName>
        <fullName>Photosystem I reaction center subunit III</fullName>
    </recommendedName>
    <alternativeName>
        <fullName>PS I subunit 7</fullName>
    </alternativeName>
    <alternativeName>
        <fullName>PSI-F</fullName>
    </alternativeName>
    <alternativeName>
        <fullName>Photosystem I 18.5 kDa protein</fullName>
    </alternativeName>
</protein>
<comment type="function">
    <text>Probably participates in efficiency of electron transfer from plastocyanin to P700 (or cytochrome c553 in algae and cyanobacteria). This plastocyanin-docking protein contributes to the specific association of plastocyanin to PSI.</text>
</comment>
<comment type="subcellular location">
    <subcellularLocation>
        <location>Plastid</location>
        <location>Chloroplast thylakoid lumen</location>
    </subcellularLocation>
</comment>
<comment type="similarity">
    <text evidence="2">Belongs to the PsaF family.</text>
</comment>
<dbReference type="PIR" id="F56819">
    <property type="entry name" value="F56819"/>
</dbReference>
<dbReference type="BRENDA" id="1.97.1.12">
    <property type="organism ID" value="1733"/>
</dbReference>
<dbReference type="GO" id="GO:0009543">
    <property type="term" value="C:chloroplast thylakoid lumen"/>
    <property type="evidence" value="ECO:0007669"/>
    <property type="project" value="UniProtKB-SubCell"/>
</dbReference>
<dbReference type="GO" id="GO:0009538">
    <property type="term" value="C:photosystem I reaction center"/>
    <property type="evidence" value="ECO:0007669"/>
    <property type="project" value="InterPro"/>
</dbReference>
<dbReference type="GO" id="GO:0015979">
    <property type="term" value="P:photosynthesis"/>
    <property type="evidence" value="ECO:0007669"/>
    <property type="project" value="UniProtKB-KW"/>
</dbReference>
<dbReference type="Gene3D" id="1.10.8.110">
    <property type="entry name" value="Photosystem I PsaF, reaction centre subunit III"/>
    <property type="match status" value="1"/>
</dbReference>
<dbReference type="InterPro" id="IPR036577">
    <property type="entry name" value="PSI_PsaF_sf"/>
</dbReference>
<dbReference type="SUPFAM" id="SSF81536">
    <property type="entry name" value="Subunit III of photosystem I reaction centre, PsaF"/>
    <property type="match status" value="1"/>
</dbReference>
<organism>
    <name type="scientific">Cucumis sativus</name>
    <name type="common">Cucumber</name>
    <dbReference type="NCBI Taxonomy" id="3659"/>
    <lineage>
        <taxon>Eukaryota</taxon>
        <taxon>Viridiplantae</taxon>
        <taxon>Streptophyta</taxon>
        <taxon>Embryophyta</taxon>
        <taxon>Tracheophyta</taxon>
        <taxon>Spermatophyta</taxon>
        <taxon>Magnoliopsida</taxon>
        <taxon>eudicotyledons</taxon>
        <taxon>Gunneridae</taxon>
        <taxon>Pentapetalae</taxon>
        <taxon>rosids</taxon>
        <taxon>fabids</taxon>
        <taxon>Cucurbitales</taxon>
        <taxon>Cucurbitaceae</taxon>
        <taxon>Benincaseae</taxon>
        <taxon>Cucumis</taxon>
    </lineage>
</organism>